<name>ASSY_HALWD</name>
<proteinExistence type="inferred from homology"/>
<accession>Q18E36</accession>
<dbReference type="EC" id="6.3.4.5" evidence="1"/>
<dbReference type="EMBL" id="AM180088">
    <property type="protein sequence ID" value="CAJ53797.1"/>
    <property type="molecule type" value="Genomic_DNA"/>
</dbReference>
<dbReference type="RefSeq" id="WP_011572879.1">
    <property type="nucleotide sequence ID" value="NC_008212.1"/>
</dbReference>
<dbReference type="SMR" id="Q18E36"/>
<dbReference type="STRING" id="362976.HQ_3711A"/>
<dbReference type="GeneID" id="4193713"/>
<dbReference type="KEGG" id="hwa:HQ_3711A"/>
<dbReference type="eggNOG" id="arCOG00112">
    <property type="taxonomic scope" value="Archaea"/>
</dbReference>
<dbReference type="HOGENOM" id="CLU_032784_4_0_2"/>
<dbReference type="UniPathway" id="UPA00068">
    <property type="reaction ID" value="UER00113"/>
</dbReference>
<dbReference type="Proteomes" id="UP000001975">
    <property type="component" value="Chromosome"/>
</dbReference>
<dbReference type="GO" id="GO:0005737">
    <property type="term" value="C:cytoplasm"/>
    <property type="evidence" value="ECO:0007669"/>
    <property type="project" value="UniProtKB-SubCell"/>
</dbReference>
<dbReference type="GO" id="GO:0004055">
    <property type="term" value="F:argininosuccinate synthase activity"/>
    <property type="evidence" value="ECO:0007669"/>
    <property type="project" value="UniProtKB-UniRule"/>
</dbReference>
<dbReference type="GO" id="GO:0005524">
    <property type="term" value="F:ATP binding"/>
    <property type="evidence" value="ECO:0007669"/>
    <property type="project" value="UniProtKB-UniRule"/>
</dbReference>
<dbReference type="GO" id="GO:0000053">
    <property type="term" value="P:argininosuccinate metabolic process"/>
    <property type="evidence" value="ECO:0007669"/>
    <property type="project" value="TreeGrafter"/>
</dbReference>
<dbReference type="GO" id="GO:0006526">
    <property type="term" value="P:L-arginine biosynthetic process"/>
    <property type="evidence" value="ECO:0007669"/>
    <property type="project" value="UniProtKB-UniRule"/>
</dbReference>
<dbReference type="GO" id="GO:0000050">
    <property type="term" value="P:urea cycle"/>
    <property type="evidence" value="ECO:0007669"/>
    <property type="project" value="TreeGrafter"/>
</dbReference>
<dbReference type="CDD" id="cd01999">
    <property type="entry name" value="ASS"/>
    <property type="match status" value="1"/>
</dbReference>
<dbReference type="FunFam" id="3.90.1260.10:FF:000007">
    <property type="entry name" value="Argininosuccinate synthase"/>
    <property type="match status" value="1"/>
</dbReference>
<dbReference type="Gene3D" id="3.90.1260.10">
    <property type="entry name" value="Argininosuccinate synthetase, chain A, domain 2"/>
    <property type="match status" value="1"/>
</dbReference>
<dbReference type="Gene3D" id="3.40.50.620">
    <property type="entry name" value="HUPs"/>
    <property type="match status" value="1"/>
</dbReference>
<dbReference type="HAMAP" id="MF_00005">
    <property type="entry name" value="Arg_succ_synth_type1"/>
    <property type="match status" value="1"/>
</dbReference>
<dbReference type="InterPro" id="IPR048268">
    <property type="entry name" value="Arginosuc_syn_C"/>
</dbReference>
<dbReference type="InterPro" id="IPR048267">
    <property type="entry name" value="Arginosuc_syn_N"/>
</dbReference>
<dbReference type="InterPro" id="IPR001518">
    <property type="entry name" value="Arginosuc_synth"/>
</dbReference>
<dbReference type="InterPro" id="IPR018223">
    <property type="entry name" value="Arginosuc_synth_CS"/>
</dbReference>
<dbReference type="InterPro" id="IPR023434">
    <property type="entry name" value="Arginosuc_synth_type_1_subfam"/>
</dbReference>
<dbReference type="InterPro" id="IPR024074">
    <property type="entry name" value="AS_cat/multimer_dom_body"/>
</dbReference>
<dbReference type="InterPro" id="IPR014729">
    <property type="entry name" value="Rossmann-like_a/b/a_fold"/>
</dbReference>
<dbReference type="NCBIfam" id="TIGR00032">
    <property type="entry name" value="argG"/>
    <property type="match status" value="1"/>
</dbReference>
<dbReference type="NCBIfam" id="NF001770">
    <property type="entry name" value="PRK00509.1"/>
    <property type="match status" value="1"/>
</dbReference>
<dbReference type="NCBIfam" id="NF010392">
    <property type="entry name" value="PRK13820.1"/>
    <property type="match status" value="1"/>
</dbReference>
<dbReference type="PANTHER" id="PTHR11587">
    <property type="entry name" value="ARGININOSUCCINATE SYNTHASE"/>
    <property type="match status" value="1"/>
</dbReference>
<dbReference type="PANTHER" id="PTHR11587:SF2">
    <property type="entry name" value="ARGININOSUCCINATE SYNTHASE"/>
    <property type="match status" value="1"/>
</dbReference>
<dbReference type="Pfam" id="PF20979">
    <property type="entry name" value="Arginosuc_syn_C"/>
    <property type="match status" value="1"/>
</dbReference>
<dbReference type="Pfam" id="PF00764">
    <property type="entry name" value="Arginosuc_synth"/>
    <property type="match status" value="1"/>
</dbReference>
<dbReference type="SUPFAM" id="SSF52402">
    <property type="entry name" value="Adenine nucleotide alpha hydrolases-like"/>
    <property type="match status" value="1"/>
</dbReference>
<dbReference type="SUPFAM" id="SSF69864">
    <property type="entry name" value="Argininosuccinate synthetase, C-terminal domain"/>
    <property type="match status" value="1"/>
</dbReference>
<dbReference type="PROSITE" id="PS00564">
    <property type="entry name" value="ARGININOSUCCIN_SYN_1"/>
    <property type="match status" value="1"/>
</dbReference>
<dbReference type="PROSITE" id="PS00565">
    <property type="entry name" value="ARGININOSUCCIN_SYN_2"/>
    <property type="match status" value="1"/>
</dbReference>
<protein>
    <recommendedName>
        <fullName evidence="1">Argininosuccinate synthase</fullName>
        <ecNumber evidence="1">6.3.4.5</ecNumber>
    </recommendedName>
    <alternativeName>
        <fullName evidence="1">Citrulline--aspartate ligase</fullName>
    </alternativeName>
</protein>
<comment type="catalytic activity">
    <reaction evidence="1">
        <text>L-citrulline + L-aspartate + ATP = 2-(N(omega)-L-arginino)succinate + AMP + diphosphate + H(+)</text>
        <dbReference type="Rhea" id="RHEA:10932"/>
        <dbReference type="ChEBI" id="CHEBI:15378"/>
        <dbReference type="ChEBI" id="CHEBI:29991"/>
        <dbReference type="ChEBI" id="CHEBI:30616"/>
        <dbReference type="ChEBI" id="CHEBI:33019"/>
        <dbReference type="ChEBI" id="CHEBI:57472"/>
        <dbReference type="ChEBI" id="CHEBI:57743"/>
        <dbReference type="ChEBI" id="CHEBI:456215"/>
        <dbReference type="EC" id="6.3.4.5"/>
    </reaction>
</comment>
<comment type="pathway">
    <text evidence="1">Amino-acid biosynthesis; L-arginine biosynthesis; L-arginine from L-ornithine and carbamoyl phosphate: step 2/3.</text>
</comment>
<comment type="subunit">
    <text evidence="1">Homotetramer.</text>
</comment>
<comment type="subcellular location">
    <subcellularLocation>
        <location evidence="1">Cytoplasm</location>
    </subcellularLocation>
</comment>
<comment type="similarity">
    <text evidence="1">Belongs to the argininosuccinate synthase family. Type 1 subfamily.</text>
</comment>
<evidence type="ECO:0000255" key="1">
    <source>
        <dbReference type="HAMAP-Rule" id="MF_00005"/>
    </source>
</evidence>
<gene>
    <name evidence="1" type="primary">argG</name>
    <name type="ordered locus">HQ_3711A</name>
</gene>
<keyword id="KW-0028">Amino-acid biosynthesis</keyword>
<keyword id="KW-0055">Arginine biosynthesis</keyword>
<keyword id="KW-0067">ATP-binding</keyword>
<keyword id="KW-0963">Cytoplasm</keyword>
<keyword id="KW-0436">Ligase</keyword>
<keyword id="KW-0547">Nucleotide-binding</keyword>
<keyword id="KW-1185">Reference proteome</keyword>
<sequence length="397" mass="43158">MTRVALAFSGGLDTTVCVSLLKEEYGYDEVIGVTVDVGQPATEFEEAQATADAHGIDLHVVDATAEFVDLCFDSVRANATYQGYPLGTALARPIIAESIVSVAKAENCDALAHGCTGKGNDQLRFEAVWRNSDLTVIAPIRELELTREWEQEYAAEHNLPVQAGNDGVWSIDTNLWSRSIEGGKLEDPNYTPPEDVYEWTADPATTTETELITIGFESGYPVSINDNAHDPVELVETLNEVAGEHGVGRTDMMEDRMLGLKVRENYEHPAATTLLNAHKALEGLVLTKDERDFKRHIDSEWAQKGYEGLVDHPLMDALEGFIDATQQRVTGTVTIKFEGGQARPVGRESAAAAYSADAASFNTSSIGEITQQDATGIAKYHGYQGRIANAATETDTK</sequence>
<organism>
    <name type="scientific">Haloquadratum walsbyi (strain DSM 16790 / HBSQ001)</name>
    <dbReference type="NCBI Taxonomy" id="362976"/>
    <lineage>
        <taxon>Archaea</taxon>
        <taxon>Methanobacteriati</taxon>
        <taxon>Methanobacteriota</taxon>
        <taxon>Stenosarchaea group</taxon>
        <taxon>Halobacteria</taxon>
        <taxon>Halobacteriales</taxon>
        <taxon>Haloferacaceae</taxon>
        <taxon>Haloquadratum</taxon>
    </lineage>
</organism>
<feature type="chain" id="PRO_0000263993" description="Argininosuccinate synthase">
    <location>
        <begin position="1"/>
        <end position="397"/>
    </location>
</feature>
<feature type="binding site" evidence="1">
    <location>
        <begin position="7"/>
        <end position="15"/>
    </location>
    <ligand>
        <name>ATP</name>
        <dbReference type="ChEBI" id="CHEBI:30616"/>
    </ligand>
</feature>
<feature type="binding site" evidence="1">
    <location>
        <position position="84"/>
    </location>
    <ligand>
        <name>L-citrulline</name>
        <dbReference type="ChEBI" id="CHEBI:57743"/>
    </ligand>
</feature>
<feature type="binding site" evidence="1">
    <location>
        <position position="114"/>
    </location>
    <ligand>
        <name>ATP</name>
        <dbReference type="ChEBI" id="CHEBI:30616"/>
    </ligand>
</feature>
<feature type="binding site" evidence="1">
    <location>
        <position position="116"/>
    </location>
    <ligand>
        <name>L-aspartate</name>
        <dbReference type="ChEBI" id="CHEBI:29991"/>
    </ligand>
</feature>
<feature type="binding site" evidence="1">
    <location>
        <position position="120"/>
    </location>
    <ligand>
        <name>L-aspartate</name>
        <dbReference type="ChEBI" id="CHEBI:29991"/>
    </ligand>
</feature>
<feature type="binding site" evidence="1">
    <location>
        <position position="120"/>
    </location>
    <ligand>
        <name>L-citrulline</name>
        <dbReference type="ChEBI" id="CHEBI:57743"/>
    </ligand>
</feature>
<feature type="binding site" evidence="1">
    <location>
        <position position="121"/>
    </location>
    <ligand>
        <name>L-aspartate</name>
        <dbReference type="ChEBI" id="CHEBI:29991"/>
    </ligand>
</feature>
<feature type="binding site" evidence="1">
    <location>
        <position position="124"/>
    </location>
    <ligand>
        <name>L-citrulline</name>
        <dbReference type="ChEBI" id="CHEBI:57743"/>
    </ligand>
</feature>
<feature type="binding site" evidence="1">
    <location>
        <position position="170"/>
    </location>
    <ligand>
        <name>L-citrulline</name>
        <dbReference type="ChEBI" id="CHEBI:57743"/>
    </ligand>
</feature>
<feature type="binding site" evidence="1">
    <location>
        <position position="179"/>
    </location>
    <ligand>
        <name>L-citrulline</name>
        <dbReference type="ChEBI" id="CHEBI:57743"/>
    </ligand>
</feature>
<feature type="binding site" evidence="1">
    <location>
        <position position="254"/>
    </location>
    <ligand>
        <name>L-citrulline</name>
        <dbReference type="ChEBI" id="CHEBI:57743"/>
    </ligand>
</feature>
<feature type="binding site" evidence="1">
    <location>
        <position position="266"/>
    </location>
    <ligand>
        <name>L-citrulline</name>
        <dbReference type="ChEBI" id="CHEBI:57743"/>
    </ligand>
</feature>
<reference key="1">
    <citation type="journal article" date="2006" name="BMC Genomics">
        <title>The genome of the square archaeon Haloquadratum walsbyi: life at the limits of water activity.</title>
        <authorList>
            <person name="Bolhuis H."/>
            <person name="Palm P."/>
            <person name="Wende A."/>
            <person name="Falb M."/>
            <person name="Rampp M."/>
            <person name="Rodriguez-Valera F."/>
            <person name="Pfeiffer F."/>
            <person name="Oesterhelt D."/>
        </authorList>
    </citation>
    <scope>NUCLEOTIDE SEQUENCE [LARGE SCALE GENOMIC DNA]</scope>
    <source>
        <strain>DSM 16790 / HBSQ001</strain>
    </source>
</reference>